<keyword id="KW-0002">3D-structure</keyword>
<keyword id="KW-0067">ATP-binding</keyword>
<keyword id="KW-0143">Chaperone</keyword>
<keyword id="KW-0256">Endoplasmic reticulum</keyword>
<keyword id="KW-0378">Hydrolase</keyword>
<keyword id="KW-0547">Nucleotide-binding</keyword>
<keyword id="KW-1185">Reference proteome</keyword>
<keyword id="KW-0732">Signal</keyword>
<keyword id="KW-0346">Stress response</keyword>
<organism>
    <name type="scientific">Plasmodium falciparum (isolate NF54)</name>
    <dbReference type="NCBI Taxonomy" id="5843"/>
    <lineage>
        <taxon>Eukaryota</taxon>
        <taxon>Sar</taxon>
        <taxon>Alveolata</taxon>
        <taxon>Apicomplexa</taxon>
        <taxon>Aconoidasida</taxon>
        <taxon>Haemosporida</taxon>
        <taxon>Plasmodiidae</taxon>
        <taxon>Plasmodium</taxon>
        <taxon>Plasmodium (Laverania)</taxon>
    </lineage>
</organism>
<dbReference type="EC" id="3.6.4.10" evidence="3"/>
<dbReference type="EMBL" id="L02822">
    <property type="protein sequence ID" value="AAA29623.1"/>
    <property type="molecule type" value="Genomic_DNA"/>
</dbReference>
<dbReference type="EMBL" id="KE123882">
    <property type="protein sequence ID" value="EWC85879.1"/>
    <property type="status" value="ALT_SEQ"/>
    <property type="molecule type" value="Genomic_DNA"/>
</dbReference>
<dbReference type="PIR" id="A48468">
    <property type="entry name" value="A48468"/>
</dbReference>
<dbReference type="PDB" id="5UMB">
    <property type="method" value="X-ray"/>
    <property type="resolution" value="2.30 A"/>
    <property type="chains" value="A/B/C/D=10-387"/>
</dbReference>
<dbReference type="PDBsum" id="5UMB"/>
<dbReference type="SMR" id="Q05866"/>
<dbReference type="EnsemblProtists" id="EWC85879">
    <property type="protein sequence ID" value="EWC85879"/>
    <property type="gene ID" value="PFNF54_05546"/>
</dbReference>
<dbReference type="Proteomes" id="UP000030673">
    <property type="component" value="Unassembled WGS sequence"/>
</dbReference>
<dbReference type="GO" id="GO:0005783">
    <property type="term" value="C:endoplasmic reticulum"/>
    <property type="evidence" value="ECO:0007669"/>
    <property type="project" value="UniProtKB-SubCell"/>
</dbReference>
<dbReference type="GO" id="GO:0005524">
    <property type="term" value="F:ATP binding"/>
    <property type="evidence" value="ECO:0007669"/>
    <property type="project" value="UniProtKB-KW"/>
</dbReference>
<dbReference type="GO" id="GO:0016887">
    <property type="term" value="F:ATP hydrolysis activity"/>
    <property type="evidence" value="ECO:0007669"/>
    <property type="project" value="RHEA"/>
</dbReference>
<dbReference type="GO" id="GO:0140662">
    <property type="term" value="F:ATP-dependent protein folding chaperone"/>
    <property type="evidence" value="ECO:0007669"/>
    <property type="project" value="InterPro"/>
</dbReference>
<dbReference type="CDD" id="cd10241">
    <property type="entry name" value="ASKHA_NBD_HSP70_BiP"/>
    <property type="match status" value="1"/>
</dbReference>
<dbReference type="FunFam" id="2.60.34.10:FF:000002">
    <property type="entry name" value="Heat shock 70 kDa"/>
    <property type="match status" value="1"/>
</dbReference>
<dbReference type="FunFam" id="3.90.640.10:FF:000002">
    <property type="entry name" value="Heat shock 70 kDa"/>
    <property type="match status" value="1"/>
</dbReference>
<dbReference type="FunFam" id="3.30.420.40:FF:000172">
    <property type="entry name" value="Heat shock 70 kDa protein"/>
    <property type="match status" value="1"/>
</dbReference>
<dbReference type="FunFam" id="3.30.30.30:FF:000001">
    <property type="entry name" value="heat shock 70 kDa protein-like"/>
    <property type="match status" value="1"/>
</dbReference>
<dbReference type="FunFam" id="1.20.1270.10:FF:000023">
    <property type="entry name" value="Heat shock protein 70"/>
    <property type="match status" value="1"/>
</dbReference>
<dbReference type="FunFam" id="3.30.420.40:FF:000026">
    <property type="entry name" value="Heat shock protein 70"/>
    <property type="match status" value="1"/>
</dbReference>
<dbReference type="Gene3D" id="1.20.1270.10">
    <property type="match status" value="1"/>
</dbReference>
<dbReference type="Gene3D" id="3.30.420.40">
    <property type="match status" value="2"/>
</dbReference>
<dbReference type="Gene3D" id="3.90.640.10">
    <property type="entry name" value="Actin, Chain A, domain 4"/>
    <property type="match status" value="1"/>
</dbReference>
<dbReference type="Gene3D" id="2.60.34.10">
    <property type="entry name" value="Substrate Binding Domain Of DNAk, Chain A, domain 1"/>
    <property type="match status" value="1"/>
</dbReference>
<dbReference type="InterPro" id="IPR043129">
    <property type="entry name" value="ATPase_NBD"/>
</dbReference>
<dbReference type="InterPro" id="IPR042050">
    <property type="entry name" value="BIP_NBD"/>
</dbReference>
<dbReference type="InterPro" id="IPR018181">
    <property type="entry name" value="Heat_shock_70_CS"/>
</dbReference>
<dbReference type="InterPro" id="IPR029048">
    <property type="entry name" value="HSP70_C_sf"/>
</dbReference>
<dbReference type="InterPro" id="IPR029047">
    <property type="entry name" value="HSP70_peptide-bd_sf"/>
</dbReference>
<dbReference type="InterPro" id="IPR013126">
    <property type="entry name" value="Hsp_70_fam"/>
</dbReference>
<dbReference type="NCBIfam" id="NF001413">
    <property type="entry name" value="PRK00290.1"/>
    <property type="match status" value="1"/>
</dbReference>
<dbReference type="PANTHER" id="PTHR19375">
    <property type="entry name" value="HEAT SHOCK PROTEIN 70KDA"/>
    <property type="match status" value="1"/>
</dbReference>
<dbReference type="Pfam" id="PF00012">
    <property type="entry name" value="HSP70"/>
    <property type="match status" value="1"/>
</dbReference>
<dbReference type="PRINTS" id="PR00301">
    <property type="entry name" value="HEATSHOCK70"/>
</dbReference>
<dbReference type="SUPFAM" id="SSF53067">
    <property type="entry name" value="Actin-like ATPase domain"/>
    <property type="match status" value="2"/>
</dbReference>
<dbReference type="SUPFAM" id="SSF100934">
    <property type="entry name" value="Heat shock protein 70kD (HSP70), C-terminal subdomain"/>
    <property type="match status" value="1"/>
</dbReference>
<dbReference type="SUPFAM" id="SSF100920">
    <property type="entry name" value="Heat shock protein 70kD (HSP70), peptide-binding domain"/>
    <property type="match status" value="1"/>
</dbReference>
<dbReference type="PROSITE" id="PS00014">
    <property type="entry name" value="ER_TARGET"/>
    <property type="match status" value="1"/>
</dbReference>
<dbReference type="PROSITE" id="PS00297">
    <property type="entry name" value="HSP70_1"/>
    <property type="match status" value="1"/>
</dbReference>
<dbReference type="PROSITE" id="PS00329">
    <property type="entry name" value="HSP70_2"/>
    <property type="match status" value="1"/>
</dbReference>
<dbReference type="PROSITE" id="PS01036">
    <property type="entry name" value="HSP70_3"/>
    <property type="match status" value="1"/>
</dbReference>
<protein>
    <recommendedName>
        <fullName evidence="3">Endoplasmic reticulum chaperone BIP</fullName>
        <ecNumber evidence="3">3.6.4.10</ecNumber>
    </recommendedName>
    <alternativeName>
        <fullName evidence="9">78 kDa glucose-regulated protein homolog</fullName>
        <shortName evidence="9">GRP-78 homolog</shortName>
        <shortName evidence="9">Pfgrp</shortName>
    </alternativeName>
    <alternativeName>
        <fullName evidence="3">Binding-immunoglobulin protein homolog</fullName>
        <shortName evidence="3">BiP</shortName>
    </alternativeName>
    <alternativeName>
        <fullName evidence="4">Heat shock protein 70-2</fullName>
        <shortName evidence="4">Pfhsp70-2</shortName>
    </alternativeName>
</protein>
<reference key="1">
    <citation type="journal article" date="1992" name="Mol. Biochem. Parasitol.">
        <title>Nucleotide sequence of a Plasmodium falciparum stress protein with similarity to mammalian 78-kDa glucose-regulated protein.</title>
        <authorList>
            <person name="Kumar N."/>
            <person name="Zheng H."/>
        </authorList>
    </citation>
    <scope>NUCLEOTIDE SEQUENCE [GENOMIC DNA]</scope>
</reference>
<reference evidence="11" key="2">
    <citation type="submission" date="2013-02" db="EMBL/GenBank/DDBJ databases">
        <title>The Genome Sequence of Plasmodium falciparum NF54.</title>
        <authorList>
            <consortium name="The Broad Institute Genome Sequencing Platform"/>
            <consortium name="The Broad Institute Genome Sequencing Center for Infectious Disease"/>
            <person name="Neafsey D."/>
            <person name="Cheeseman I."/>
            <person name="Volkman S."/>
            <person name="Adams J."/>
            <person name="Walker B."/>
            <person name="Young S.K."/>
            <person name="Zeng Q."/>
            <person name="Gargeya S."/>
            <person name="Fitzgerald M."/>
            <person name="Haas B."/>
            <person name="Abouelleil A."/>
            <person name="Alvarado L."/>
            <person name="Arachchi H.M."/>
            <person name="Berlin A.M."/>
            <person name="Chapman S.B."/>
            <person name="Dewar J."/>
            <person name="Goldberg J."/>
            <person name="Griggs A."/>
            <person name="Gujja S."/>
            <person name="Hansen M."/>
            <person name="Howarth C."/>
            <person name="Imamovic A."/>
            <person name="Larimer J."/>
            <person name="McCowan C."/>
            <person name="Murphy C."/>
            <person name="Neiman D."/>
            <person name="Pearson M."/>
            <person name="Priest M."/>
            <person name="Roberts A."/>
            <person name="Saif S."/>
            <person name="Shea T."/>
            <person name="Sisk P."/>
            <person name="Sykes S."/>
            <person name="Wortman J."/>
            <person name="Nusbaum C."/>
            <person name="Birren B."/>
        </authorList>
    </citation>
    <scope>NUCLEOTIDE SEQUENCE [LARGE SCALE GENOMIC DNA]</scope>
    <source>
        <strain evidence="11">NF54</strain>
    </source>
</reference>
<feature type="signal peptide" evidence="6">
    <location>
        <begin position="1"/>
        <end position="24"/>
    </location>
</feature>
<feature type="chain" id="PRO_0000013575" description="Endoplasmic reticulum chaperone BIP">
    <location>
        <begin position="25"/>
        <end position="652"/>
    </location>
</feature>
<feature type="region of interest" description="Nucleotide-binding (NBD)" evidence="3">
    <location>
        <begin position="124"/>
        <end position="277"/>
    </location>
</feature>
<feature type="region of interest" description="Substrate-binding (SBD)" evidence="3">
    <location>
        <begin position="397"/>
        <end position="496"/>
    </location>
</feature>
<feature type="region of interest" description="Disordered" evidence="8">
    <location>
        <begin position="630"/>
        <end position="652"/>
    </location>
</feature>
<feature type="short sequence motif" description="Prevents secretion from ER" evidence="7">
    <location>
        <begin position="649"/>
        <end position="652"/>
    </location>
</feature>
<feature type="compositionally biased region" description="Acidic residues" evidence="8">
    <location>
        <begin position="643"/>
        <end position="652"/>
    </location>
</feature>
<feature type="binding site" evidence="3">
    <location>
        <begin position="36"/>
        <end position="39"/>
    </location>
    <ligand>
        <name>ATP</name>
        <dbReference type="ChEBI" id="CHEBI:30616"/>
    </ligand>
</feature>
<feature type="binding site" evidence="3">
    <location>
        <position position="95"/>
    </location>
    <ligand>
        <name>ATP</name>
        <dbReference type="ChEBI" id="CHEBI:30616"/>
    </ligand>
</feature>
<feature type="binding site" evidence="3">
    <location>
        <begin position="224"/>
        <end position="226"/>
    </location>
    <ligand>
        <name>ATP</name>
        <dbReference type="ChEBI" id="CHEBI:30616"/>
    </ligand>
</feature>
<feature type="binding site" evidence="3">
    <location>
        <begin position="290"/>
        <end position="297"/>
    </location>
    <ligand>
        <name>ATP</name>
        <dbReference type="ChEBI" id="CHEBI:30616"/>
    </ligand>
</feature>
<feature type="binding site" evidence="3">
    <location>
        <begin position="361"/>
        <end position="364"/>
    </location>
    <ligand>
        <name>ATP</name>
        <dbReference type="ChEBI" id="CHEBI:30616"/>
    </ligand>
</feature>
<feature type="sequence conflict" description="In Ref. 1; AAA29623." evidence="10" ref="1">
    <original>K</original>
    <variation>N</variation>
    <location>
        <position position="2"/>
    </location>
</feature>
<feature type="sequence conflict" description="In Ref. 1; AAA29623." evidence="10" ref="1">
    <original>L</original>
    <variation>V</variation>
    <location>
        <position position="85"/>
    </location>
</feature>
<feature type="sequence conflict" description="In Ref. 1; AAA29623." evidence="10" ref="1">
    <original>NE</original>
    <variation>INQ</variation>
    <location>
        <begin position="198"/>
        <end position="199"/>
    </location>
</feature>
<feature type="sequence conflict" description="In Ref. 1; AAA29623." evidence="10" ref="1">
    <original>G</original>
    <variation>A</variation>
    <location>
        <position position="208"/>
    </location>
</feature>
<feature type="sequence conflict" description="In Ref. 1; AAA29623." evidence="10" ref="1">
    <original>K</original>
    <variation>KEF</variation>
    <location>
        <position position="373"/>
    </location>
</feature>
<feature type="sequence conflict" description="In Ref. 1; AAA29623." evidence="10" ref="1">
    <original>N</original>
    <variation>K</variation>
    <location>
        <position position="560"/>
    </location>
</feature>
<feature type="strand" evidence="12">
    <location>
        <begin position="30"/>
        <end position="35"/>
    </location>
</feature>
<feature type="strand" evidence="12">
    <location>
        <begin position="37"/>
        <end position="46"/>
    </location>
</feature>
<feature type="strand" evidence="12">
    <location>
        <begin position="49"/>
        <end position="52"/>
    </location>
</feature>
<feature type="strand" evidence="12">
    <location>
        <begin position="66"/>
        <end position="69"/>
    </location>
</feature>
<feature type="strand" evidence="12">
    <location>
        <begin position="72"/>
        <end position="76"/>
    </location>
</feature>
<feature type="helix" evidence="12">
    <location>
        <begin position="77"/>
        <end position="80"/>
    </location>
</feature>
<feature type="turn" evidence="12">
    <location>
        <begin position="81"/>
        <end position="85"/>
    </location>
</feature>
<feature type="turn" evidence="12">
    <location>
        <begin position="87"/>
        <end position="89"/>
    </location>
</feature>
<feature type="helix" evidence="12">
    <location>
        <begin position="94"/>
        <end position="96"/>
    </location>
</feature>
<feature type="turn" evidence="12">
    <location>
        <begin position="97"/>
        <end position="99"/>
    </location>
</feature>
<feature type="helix" evidence="12">
    <location>
        <begin position="105"/>
        <end position="113"/>
    </location>
</feature>
<feature type="strand" evidence="12">
    <location>
        <begin position="115"/>
        <end position="121"/>
    </location>
</feature>
<feature type="strand" evidence="12">
    <location>
        <begin position="124"/>
        <end position="131"/>
    </location>
</feature>
<feature type="strand" evidence="12">
    <location>
        <begin position="134"/>
        <end position="138"/>
    </location>
</feature>
<feature type="helix" evidence="12">
    <location>
        <begin position="140"/>
        <end position="159"/>
    </location>
</feature>
<feature type="strand" evidence="12">
    <location>
        <begin position="165"/>
        <end position="170"/>
    </location>
</feature>
<feature type="helix" evidence="12">
    <location>
        <begin position="176"/>
        <end position="188"/>
    </location>
</feature>
<feature type="strand" evidence="12">
    <location>
        <begin position="192"/>
        <end position="198"/>
    </location>
</feature>
<feature type="helix" evidence="12">
    <location>
        <begin position="199"/>
        <end position="206"/>
    </location>
</feature>
<feature type="strand" evidence="12">
    <location>
        <begin position="213"/>
        <end position="222"/>
    </location>
</feature>
<feature type="strand" evidence="12">
    <location>
        <begin position="227"/>
        <end position="237"/>
    </location>
</feature>
<feature type="strand" evidence="12">
    <location>
        <begin position="239"/>
        <end position="247"/>
    </location>
</feature>
<feature type="helix" evidence="12">
    <location>
        <begin position="252"/>
        <end position="271"/>
    </location>
</feature>
<feature type="helix" evidence="12">
    <location>
        <begin position="275"/>
        <end position="277"/>
    </location>
</feature>
<feature type="helix" evidence="12">
    <location>
        <begin position="279"/>
        <end position="295"/>
    </location>
</feature>
<feature type="turn" evidence="12">
    <location>
        <begin position="296"/>
        <end position="298"/>
    </location>
</feature>
<feature type="strand" evidence="12">
    <location>
        <begin position="299"/>
        <end position="310"/>
    </location>
</feature>
<feature type="strand" evidence="12">
    <location>
        <begin position="313"/>
        <end position="320"/>
    </location>
</feature>
<feature type="helix" evidence="12">
    <location>
        <begin position="321"/>
        <end position="334"/>
    </location>
</feature>
<feature type="helix" evidence="12">
    <location>
        <begin position="336"/>
        <end position="346"/>
    </location>
</feature>
<feature type="helix" evidence="12">
    <location>
        <begin position="350"/>
        <end position="352"/>
    </location>
</feature>
<feature type="strand" evidence="12">
    <location>
        <begin position="355"/>
        <end position="360"/>
    </location>
</feature>
<feature type="helix" evidence="12">
    <location>
        <begin position="361"/>
        <end position="364"/>
    </location>
</feature>
<feature type="helix" evidence="12">
    <location>
        <begin position="366"/>
        <end position="375"/>
    </location>
</feature>
<feature type="turn" evidence="12">
    <location>
        <begin position="376"/>
        <end position="378"/>
    </location>
</feature>
<feature type="turn" evidence="12">
    <location>
        <begin position="387"/>
        <end position="389"/>
    </location>
</feature>
<feature type="helix" evidence="12">
    <location>
        <begin position="390"/>
        <end position="403"/>
    </location>
</feature>
<name>BIP_PLAFO</name>
<proteinExistence type="evidence at protein level"/>
<comment type="function">
    <text evidence="2 3 5">Endoplasmic reticulum chaperone that plays a key role in protein folding and quality control in the endoplasmic reticulum lumen. Involved in the correct folding of proteins and degradation of misfolded proteins (By similarity). Acts as a key repressor of the unfolded protein response (UPR) (By similarity).</text>
</comment>
<comment type="catalytic activity">
    <reaction evidence="3">
        <text>ATP + H2O = ADP + phosphate + H(+)</text>
        <dbReference type="Rhea" id="RHEA:13065"/>
        <dbReference type="ChEBI" id="CHEBI:15377"/>
        <dbReference type="ChEBI" id="CHEBI:15378"/>
        <dbReference type="ChEBI" id="CHEBI:30616"/>
        <dbReference type="ChEBI" id="CHEBI:43474"/>
        <dbReference type="ChEBI" id="CHEBI:456216"/>
        <dbReference type="EC" id="3.6.4.10"/>
    </reaction>
</comment>
<comment type="activity regulation">
    <text evidence="3">The chaperone activity is regulated by ATP-induced allosteric coupling of the nucleotide-binding (NBD) and substrate-binding (SBD) domains. In the ADP-bound and nucleotide-free (apo) states, the two domains have little interaction. In contrast, in the ATP-bound state the two domains are tightly coupled, which results in drastically accelerated kinetics in both binding and release of polypeptide substrates. J domain-containing co-chaperones stimulate the ATPase activity and are required for efficient substrate recognition.</text>
</comment>
<comment type="subunit">
    <text evidence="1">Interacts with PK4; the interaction is disrupted in response to stress.</text>
</comment>
<comment type="subcellular location">
    <subcellularLocation>
        <location evidence="1">Endoplasmic reticulum</location>
    </subcellularLocation>
</comment>
<comment type="similarity">
    <text evidence="10">Belongs to the heat shock protein 70 family.</text>
</comment>
<comment type="sequence caution" evidence="10">
    <conflict type="erroneous gene model prediction">
        <sequence resource="EMBL-CDS" id="EWC85879"/>
    </conflict>
</comment>
<evidence type="ECO:0000250" key="1">
    <source>
        <dbReference type="UniProtKB" id="A0A509AJG0"/>
    </source>
</evidence>
<evidence type="ECO:0000250" key="2">
    <source>
        <dbReference type="UniProtKB" id="G3I8R9"/>
    </source>
</evidence>
<evidence type="ECO:0000250" key="3">
    <source>
        <dbReference type="UniProtKB" id="P11021"/>
    </source>
</evidence>
<evidence type="ECO:0000250" key="4">
    <source>
        <dbReference type="UniProtKB" id="P12794"/>
    </source>
</evidence>
<evidence type="ECO:0000250" key="5">
    <source>
        <dbReference type="UniProtKB" id="P20029"/>
    </source>
</evidence>
<evidence type="ECO:0000255" key="6"/>
<evidence type="ECO:0000255" key="7">
    <source>
        <dbReference type="PROSITE-ProRule" id="PRU10138"/>
    </source>
</evidence>
<evidence type="ECO:0000256" key="8">
    <source>
        <dbReference type="SAM" id="MobiDB-lite"/>
    </source>
</evidence>
<evidence type="ECO:0000303" key="9">
    <source>
    </source>
</evidence>
<evidence type="ECO:0000305" key="10"/>
<evidence type="ECO:0000312" key="11">
    <source>
        <dbReference type="Proteomes" id="UP000030673"/>
    </source>
</evidence>
<evidence type="ECO:0007829" key="12">
    <source>
        <dbReference type="PDB" id="5UMB"/>
    </source>
</evidence>
<accession>Q05866</accession>
<accession>W7JXN5</accession>
<gene>
    <name evidence="1" type="primary">BIP</name>
</gene>
<sequence length="652" mass="72388">MKQIRPYILLLIVSLLKFISAVDSNIEGPVIGIDLGTTYSCVGVFKNGRVEILNNELGNRITPSYVSFVDGERKVGEAAKLEATLHPTQTVFDVKRLIGRKFDDQEVVKDRSLLPYEIVNNQGKPNIKVQIKDKDTTFAPEQISAMVLEKMKEIAQSFLGKPVKNAVVTVPAYFNDAQRQATKDAGTIAGLNIVRIINEPTAAALAYGLDKKEETSILVYDLGGGTFDVSILVIDNGVFEVYATAGNTHLGGEDFDQRVMDYFIKMFKKKNNIDLRTDKRAIQKLRKEVEIAKRNLSVVHSTQIEIEDIVEGHNFSETLTRAKFEELNDDLFRETLEPVKKVLDDAKYEKSKIDEIVLVGGSTRIPKIQQIIKEFFNGKEPNRGINPDEAVAYGAAIQAGIILGEELQDVVLLDVTPLTLGIETVGGIMTQLIKRNTVIPTKKSQTFSTYQDNQPAVLIQVFEGERALTKDNHLLGKFELSGIPPAQRGVPKIEVTFTVDKNGILHVEAEDKGTGKSRGITITNDKGRLSKEQIEKMINDAEKFADEDKNLREKVEAKNNLDNYIQSMKATVEDKDKLADKIEKEDKNTILSAVKDAEDWLNNNSNADSEALKQKLKDLEAVCQPIIVKLYGQPGGPSPQPSGDEDVDSDEL</sequence>